<comment type="subcellular location">
    <subcellularLocation>
        <location evidence="1">Spore core</location>
    </subcellularLocation>
</comment>
<comment type="induction">
    <text evidence="1">Expressed only in the forespore compartment of sporulating cells.</text>
</comment>
<comment type="similarity">
    <text evidence="1">Belongs to the SspI family.</text>
</comment>
<proteinExistence type="inferred from homology"/>
<organism>
    <name type="scientific">Geobacillus kaustophilus (strain HTA426)</name>
    <dbReference type="NCBI Taxonomy" id="235909"/>
    <lineage>
        <taxon>Bacteria</taxon>
        <taxon>Bacillati</taxon>
        <taxon>Bacillota</taxon>
        <taxon>Bacilli</taxon>
        <taxon>Bacillales</taxon>
        <taxon>Anoxybacillaceae</taxon>
        <taxon>Geobacillus</taxon>
        <taxon>Geobacillus thermoleovorans group</taxon>
    </lineage>
</organism>
<accession>Q5KWD9</accession>
<protein>
    <recommendedName>
        <fullName evidence="1">Small, acid-soluble spore protein I</fullName>
        <shortName evidence="1">SASP I</shortName>
    </recommendedName>
</protein>
<keyword id="KW-1185">Reference proteome</keyword>
<keyword id="KW-0749">Sporulation</keyword>
<dbReference type="EMBL" id="BA000043">
    <property type="protein sequence ID" value="BAD76997.1"/>
    <property type="molecule type" value="Genomic_DNA"/>
</dbReference>
<dbReference type="RefSeq" id="WP_011232186.1">
    <property type="nucleotide sequence ID" value="NC_006510.1"/>
</dbReference>
<dbReference type="SMR" id="Q5KWD9"/>
<dbReference type="STRING" id="235909.GK2712"/>
<dbReference type="KEGG" id="gka:GK2712"/>
<dbReference type="PATRIC" id="fig|235909.7.peg.2896"/>
<dbReference type="eggNOG" id="ENOG5032YQ7">
    <property type="taxonomic scope" value="Bacteria"/>
</dbReference>
<dbReference type="HOGENOM" id="CLU_188877_0_0_9"/>
<dbReference type="Proteomes" id="UP000001172">
    <property type="component" value="Chromosome"/>
</dbReference>
<dbReference type="GO" id="GO:0030436">
    <property type="term" value="P:asexual sporulation"/>
    <property type="evidence" value="ECO:0007669"/>
    <property type="project" value="UniProtKB-UniRule"/>
</dbReference>
<dbReference type="GO" id="GO:0030435">
    <property type="term" value="P:sporulation resulting in formation of a cellular spore"/>
    <property type="evidence" value="ECO:0007669"/>
    <property type="project" value="UniProtKB-KW"/>
</dbReference>
<dbReference type="HAMAP" id="MF_00669">
    <property type="entry name" value="SspI"/>
    <property type="match status" value="1"/>
</dbReference>
<dbReference type="InterPro" id="IPR017525">
    <property type="entry name" value="SspI"/>
</dbReference>
<dbReference type="NCBIfam" id="TIGR03092">
    <property type="entry name" value="SASP_sspI"/>
    <property type="match status" value="1"/>
</dbReference>
<dbReference type="Pfam" id="PF14098">
    <property type="entry name" value="SSPI"/>
    <property type="match status" value="1"/>
</dbReference>
<name>SSPI_GEOKA</name>
<evidence type="ECO:0000255" key="1">
    <source>
        <dbReference type="HAMAP-Rule" id="MF_00669"/>
    </source>
</evidence>
<feature type="chain" id="PRO_0000218336" description="Small, acid-soluble spore protein I">
    <location>
        <begin position="1"/>
        <end position="69"/>
    </location>
</feature>
<sequence length="69" mass="7978">MDLNLREAIMHNVANNTKEQLEHTIEDAIQRGEEKYLPGLGVLFEAIWTHANEQQKDMMLTTLEQAVKQ</sequence>
<gene>
    <name evidence="1" type="primary">sspI</name>
    <name type="ordered locus">GK2712</name>
</gene>
<reference key="1">
    <citation type="journal article" date="2004" name="Nucleic Acids Res.">
        <title>Thermoadaptation trait revealed by the genome sequence of thermophilic Geobacillus kaustophilus.</title>
        <authorList>
            <person name="Takami H."/>
            <person name="Takaki Y."/>
            <person name="Chee G.-J."/>
            <person name="Nishi S."/>
            <person name="Shimamura S."/>
            <person name="Suzuki H."/>
            <person name="Matsui S."/>
            <person name="Uchiyama I."/>
        </authorList>
    </citation>
    <scope>NUCLEOTIDE SEQUENCE [LARGE SCALE GENOMIC DNA]</scope>
    <source>
        <strain>HTA426</strain>
    </source>
</reference>